<gene>
    <name evidence="1" type="primary">anmK</name>
    <name type="ordered locus">SG1445</name>
</gene>
<reference key="1">
    <citation type="journal article" date="2006" name="Genome Res.">
        <title>Massive genome erosion and functional adaptations provide insights into the symbiotic lifestyle of Sodalis glossinidius in the tsetse host.</title>
        <authorList>
            <person name="Toh H."/>
            <person name="Weiss B.L."/>
            <person name="Perkin S.A.H."/>
            <person name="Yamashita A."/>
            <person name="Oshima K."/>
            <person name="Hattori M."/>
            <person name="Aksoy S."/>
        </authorList>
    </citation>
    <scope>NUCLEOTIDE SEQUENCE [LARGE SCALE GENOMIC DNA]</scope>
    <source>
        <strain>morsitans</strain>
    </source>
</reference>
<proteinExistence type="inferred from homology"/>
<protein>
    <recommendedName>
        <fullName evidence="1">Anhydro-N-acetylmuramic acid kinase</fullName>
        <ecNumber evidence="1">2.7.1.170</ecNumber>
    </recommendedName>
    <alternativeName>
        <fullName evidence="1">AnhMurNAc kinase</fullName>
    </alternativeName>
</protein>
<keyword id="KW-0067">ATP-binding</keyword>
<keyword id="KW-0119">Carbohydrate metabolism</keyword>
<keyword id="KW-0418">Kinase</keyword>
<keyword id="KW-0547">Nucleotide-binding</keyword>
<keyword id="KW-0808">Transferase</keyword>
<feature type="chain" id="PRO_0000250064" description="Anhydro-N-acetylmuramic acid kinase">
    <location>
        <begin position="1"/>
        <end position="374"/>
    </location>
</feature>
<feature type="binding site" evidence="1">
    <location>
        <begin position="12"/>
        <end position="19"/>
    </location>
    <ligand>
        <name>ATP</name>
        <dbReference type="ChEBI" id="CHEBI:30616"/>
    </ligand>
</feature>
<accession>Q2NT05</accession>
<sequence length="374" mass="40474">MRTGRYIGIMSGTSLDGIDVVLAAIDEHTVAQQARYCHPIPMPIKQQILAMCQGQAVTLSRFGQLDTRLGILFAEAVLCLLQQTGVAPHEVTAIACHGQTVWHEPEGVAPCTLQIGDNNCIAAMTGITTVGDFRRRDMALGGQGAPLMPAFHHALLAHPQERRMVLNIGGIANLSLLLPGQPIRGYDTGPGNMLLDAWTWRHRKAPYDKDGRWARSGQVHQSLLQHLLADDYFLRAAPKSTGREYFNLGWLERKLSRLGPVPAQDVQATLVELTARTIAQQVLLCGGCEHLLVCGGGVRNPLVMNRLSALLPGIEVSPTDKFGVSGDDMEALAFAWLAFRTLSGLPGNLPSVTGAREETLLGAIYPVMPATEKT</sequence>
<evidence type="ECO:0000255" key="1">
    <source>
        <dbReference type="HAMAP-Rule" id="MF_01270"/>
    </source>
</evidence>
<organism>
    <name type="scientific">Sodalis glossinidius (strain morsitans)</name>
    <dbReference type="NCBI Taxonomy" id="343509"/>
    <lineage>
        <taxon>Bacteria</taxon>
        <taxon>Pseudomonadati</taxon>
        <taxon>Pseudomonadota</taxon>
        <taxon>Gammaproteobacteria</taxon>
        <taxon>Enterobacterales</taxon>
        <taxon>Bruguierivoracaceae</taxon>
        <taxon>Sodalis</taxon>
    </lineage>
</organism>
<dbReference type="EC" id="2.7.1.170" evidence="1"/>
<dbReference type="EMBL" id="AP008232">
    <property type="protein sequence ID" value="BAE74720.1"/>
    <property type="molecule type" value="Genomic_DNA"/>
</dbReference>
<dbReference type="RefSeq" id="WP_011411265.1">
    <property type="nucleotide sequence ID" value="NC_007712.1"/>
</dbReference>
<dbReference type="SMR" id="Q2NT05"/>
<dbReference type="STRING" id="343509.SG1445"/>
<dbReference type="KEGG" id="sgl:SG1445"/>
<dbReference type="eggNOG" id="COG2377">
    <property type="taxonomic scope" value="Bacteria"/>
</dbReference>
<dbReference type="HOGENOM" id="CLU_038782_0_0_6"/>
<dbReference type="OrthoDB" id="9763949at2"/>
<dbReference type="UniPathway" id="UPA00343"/>
<dbReference type="UniPathway" id="UPA00544"/>
<dbReference type="Proteomes" id="UP000001932">
    <property type="component" value="Chromosome"/>
</dbReference>
<dbReference type="GO" id="GO:0005524">
    <property type="term" value="F:ATP binding"/>
    <property type="evidence" value="ECO:0007669"/>
    <property type="project" value="UniProtKB-UniRule"/>
</dbReference>
<dbReference type="GO" id="GO:0016301">
    <property type="term" value="F:kinase activity"/>
    <property type="evidence" value="ECO:0007669"/>
    <property type="project" value="UniProtKB-KW"/>
</dbReference>
<dbReference type="GO" id="GO:0016773">
    <property type="term" value="F:phosphotransferase activity, alcohol group as acceptor"/>
    <property type="evidence" value="ECO:0007669"/>
    <property type="project" value="UniProtKB-UniRule"/>
</dbReference>
<dbReference type="GO" id="GO:0097175">
    <property type="term" value="P:1,6-anhydro-N-acetyl-beta-muramic acid catabolic process"/>
    <property type="evidence" value="ECO:0007669"/>
    <property type="project" value="UniProtKB-UniRule"/>
</dbReference>
<dbReference type="GO" id="GO:0006040">
    <property type="term" value="P:amino sugar metabolic process"/>
    <property type="evidence" value="ECO:0007669"/>
    <property type="project" value="InterPro"/>
</dbReference>
<dbReference type="GO" id="GO:0009254">
    <property type="term" value="P:peptidoglycan turnover"/>
    <property type="evidence" value="ECO:0007669"/>
    <property type="project" value="UniProtKB-UniRule"/>
</dbReference>
<dbReference type="CDD" id="cd24050">
    <property type="entry name" value="ASKHA_NBD_ANMK"/>
    <property type="match status" value="1"/>
</dbReference>
<dbReference type="Gene3D" id="3.30.420.40">
    <property type="match status" value="2"/>
</dbReference>
<dbReference type="HAMAP" id="MF_01270">
    <property type="entry name" value="AnhMurNAc_kinase"/>
    <property type="match status" value="1"/>
</dbReference>
<dbReference type="InterPro" id="IPR005338">
    <property type="entry name" value="Anhydro_N_Ac-Mur_kinase"/>
</dbReference>
<dbReference type="InterPro" id="IPR043129">
    <property type="entry name" value="ATPase_NBD"/>
</dbReference>
<dbReference type="NCBIfam" id="NF007138">
    <property type="entry name" value="PRK09585.1-1"/>
    <property type="match status" value="1"/>
</dbReference>
<dbReference type="NCBIfam" id="NF007139">
    <property type="entry name" value="PRK09585.1-3"/>
    <property type="match status" value="1"/>
</dbReference>
<dbReference type="NCBIfam" id="NF007148">
    <property type="entry name" value="PRK09585.3-2"/>
    <property type="match status" value="1"/>
</dbReference>
<dbReference type="PANTHER" id="PTHR30605">
    <property type="entry name" value="ANHYDRO-N-ACETYLMURAMIC ACID KINASE"/>
    <property type="match status" value="1"/>
</dbReference>
<dbReference type="PANTHER" id="PTHR30605:SF0">
    <property type="entry name" value="ANHYDRO-N-ACETYLMURAMIC ACID KINASE"/>
    <property type="match status" value="1"/>
</dbReference>
<dbReference type="Pfam" id="PF03702">
    <property type="entry name" value="AnmK"/>
    <property type="match status" value="1"/>
</dbReference>
<dbReference type="SUPFAM" id="SSF53067">
    <property type="entry name" value="Actin-like ATPase domain"/>
    <property type="match status" value="1"/>
</dbReference>
<comment type="function">
    <text evidence="1">Catalyzes the specific phosphorylation of 1,6-anhydro-N-acetylmuramic acid (anhMurNAc) with the simultaneous cleavage of the 1,6-anhydro ring, generating MurNAc-6-P. Is required for the utilization of anhMurNAc either imported from the medium or derived from its own cell wall murein, and thus plays a role in cell wall recycling.</text>
</comment>
<comment type="catalytic activity">
    <reaction evidence="1">
        <text>1,6-anhydro-N-acetyl-beta-muramate + ATP + H2O = N-acetyl-D-muramate 6-phosphate + ADP + H(+)</text>
        <dbReference type="Rhea" id="RHEA:24952"/>
        <dbReference type="ChEBI" id="CHEBI:15377"/>
        <dbReference type="ChEBI" id="CHEBI:15378"/>
        <dbReference type="ChEBI" id="CHEBI:30616"/>
        <dbReference type="ChEBI" id="CHEBI:58690"/>
        <dbReference type="ChEBI" id="CHEBI:58722"/>
        <dbReference type="ChEBI" id="CHEBI:456216"/>
        <dbReference type="EC" id="2.7.1.170"/>
    </reaction>
</comment>
<comment type="pathway">
    <text evidence="1">Amino-sugar metabolism; 1,6-anhydro-N-acetylmuramate degradation.</text>
</comment>
<comment type="pathway">
    <text evidence="1">Cell wall biogenesis; peptidoglycan recycling.</text>
</comment>
<comment type="similarity">
    <text evidence="1">Belongs to the anhydro-N-acetylmuramic acid kinase family.</text>
</comment>
<name>ANMK_SODGM</name>